<comment type="function">
    <text evidence="1">NQR complex catalyzes the reduction of ubiquinone-1 to ubiquinol by two successive reactions, coupled with the transport of Na(+) ions from the cytoplasm to the periplasm. The first step is catalyzed by NqrF, which accepts electrons from NADH and reduces ubiquinone-1 to ubisemiquinone by a one-electron transfer pathway.</text>
</comment>
<comment type="catalytic activity">
    <reaction evidence="1">
        <text>a ubiquinone + n Na(+)(in) + NADH + H(+) = a ubiquinol + n Na(+)(out) + NAD(+)</text>
        <dbReference type="Rhea" id="RHEA:47748"/>
        <dbReference type="Rhea" id="RHEA-COMP:9565"/>
        <dbReference type="Rhea" id="RHEA-COMP:9566"/>
        <dbReference type="ChEBI" id="CHEBI:15378"/>
        <dbReference type="ChEBI" id="CHEBI:16389"/>
        <dbReference type="ChEBI" id="CHEBI:17976"/>
        <dbReference type="ChEBI" id="CHEBI:29101"/>
        <dbReference type="ChEBI" id="CHEBI:57540"/>
        <dbReference type="ChEBI" id="CHEBI:57945"/>
        <dbReference type="EC" id="7.2.1.1"/>
    </reaction>
</comment>
<comment type="cofactor">
    <cofactor evidence="1">
        <name>[2Fe-2S] cluster</name>
        <dbReference type="ChEBI" id="CHEBI:190135"/>
    </cofactor>
    <text evidence="1">Binds 1 [2Fe-2S] cluster.</text>
</comment>
<comment type="cofactor">
    <cofactor evidence="1">
        <name>FAD</name>
        <dbReference type="ChEBI" id="CHEBI:57692"/>
    </cofactor>
</comment>
<comment type="subunit">
    <text evidence="1">Composed of six subunits; NqrA, NqrB, NqrC, NqrD, NqrE and NqrF.</text>
</comment>
<comment type="subcellular location">
    <subcellularLocation>
        <location evidence="1">Cell inner membrane</location>
        <topology evidence="1">Single-pass membrane protein</topology>
    </subcellularLocation>
</comment>
<comment type="similarity">
    <text evidence="1">Belongs to the NqrF family.</text>
</comment>
<reference key="1">
    <citation type="submission" date="2007-02" db="EMBL/GenBank/DDBJ databases">
        <title>Complete sequence of chromosome of Yersinia pestis Pestoides F.</title>
        <authorList>
            <consortium name="US DOE Joint Genome Institute"/>
            <person name="Copeland A."/>
            <person name="Lucas S."/>
            <person name="Lapidus A."/>
            <person name="Barry K."/>
            <person name="Detter J.C."/>
            <person name="Glavina del Rio T."/>
            <person name="Hammon N."/>
            <person name="Israni S."/>
            <person name="Dalin E."/>
            <person name="Tice H."/>
            <person name="Pitluck S."/>
            <person name="Di Bartolo G."/>
            <person name="Chain P."/>
            <person name="Malfatti S."/>
            <person name="Shin M."/>
            <person name="Vergez L."/>
            <person name="Schmutz J."/>
            <person name="Larimer F."/>
            <person name="Land M."/>
            <person name="Hauser L."/>
            <person name="Worsham P."/>
            <person name="Chu M."/>
            <person name="Bearden S."/>
            <person name="Garcia E."/>
            <person name="Richardson P."/>
        </authorList>
    </citation>
    <scope>NUCLEOTIDE SEQUENCE [LARGE SCALE GENOMIC DNA]</scope>
    <source>
        <strain>Pestoides F</strain>
    </source>
</reference>
<evidence type="ECO:0000255" key="1">
    <source>
        <dbReference type="HAMAP-Rule" id="MF_00430"/>
    </source>
</evidence>
<proteinExistence type="inferred from homology"/>
<protein>
    <recommendedName>
        <fullName evidence="1">Na(+)-translocating NADH-quinone reductase subunit F</fullName>
        <shortName evidence="1">Na(+)-NQR subunit F</shortName>
        <shortName evidence="1">Na(+)-translocating NQR subunit F</shortName>
        <ecNumber evidence="1">7.2.1.1</ecNumber>
    </recommendedName>
    <alternativeName>
        <fullName evidence="1">NQR complex subunit F</fullName>
    </alternativeName>
    <alternativeName>
        <fullName evidence="1">NQR-1 subunit F</fullName>
    </alternativeName>
</protein>
<organism>
    <name type="scientific">Yersinia pestis (strain Pestoides F)</name>
    <dbReference type="NCBI Taxonomy" id="386656"/>
    <lineage>
        <taxon>Bacteria</taxon>
        <taxon>Pseudomonadati</taxon>
        <taxon>Pseudomonadota</taxon>
        <taxon>Gammaproteobacteria</taxon>
        <taxon>Enterobacterales</taxon>
        <taxon>Yersiniaceae</taxon>
        <taxon>Yersinia</taxon>
    </lineage>
</organism>
<feature type="chain" id="PRO_1000080600" description="Na(+)-translocating NADH-quinone reductase subunit F">
    <location>
        <begin position="1"/>
        <end position="407"/>
    </location>
</feature>
<feature type="transmembrane region" description="Helical" evidence="1">
    <location>
        <begin position="3"/>
        <end position="23"/>
    </location>
</feature>
<feature type="domain" description="2Fe-2S ferredoxin-type" evidence="1">
    <location>
        <begin position="32"/>
        <end position="126"/>
    </location>
</feature>
<feature type="domain" description="FAD-binding FR-type" evidence="1">
    <location>
        <begin position="129"/>
        <end position="269"/>
    </location>
</feature>
<feature type="binding site" evidence="1">
    <location>
        <position position="69"/>
    </location>
    <ligand>
        <name>[2Fe-2S] cluster</name>
        <dbReference type="ChEBI" id="CHEBI:190135"/>
    </ligand>
</feature>
<feature type="binding site" evidence="1">
    <location>
        <position position="75"/>
    </location>
    <ligand>
        <name>[2Fe-2S] cluster</name>
        <dbReference type="ChEBI" id="CHEBI:190135"/>
    </ligand>
</feature>
<feature type="binding site" evidence="1">
    <location>
        <position position="78"/>
    </location>
    <ligand>
        <name>[2Fe-2S] cluster</name>
        <dbReference type="ChEBI" id="CHEBI:190135"/>
    </ligand>
</feature>
<feature type="binding site" evidence="1">
    <location>
        <position position="110"/>
    </location>
    <ligand>
        <name>[2Fe-2S] cluster</name>
        <dbReference type="ChEBI" id="CHEBI:190135"/>
    </ligand>
</feature>
<dbReference type="EC" id="7.2.1.1" evidence="1"/>
<dbReference type="EMBL" id="CP000668">
    <property type="protein sequence ID" value="ABP41224.1"/>
    <property type="molecule type" value="Genomic_DNA"/>
</dbReference>
<dbReference type="RefSeq" id="WP_002208711.1">
    <property type="nucleotide sequence ID" value="NZ_CP009715.1"/>
</dbReference>
<dbReference type="SMR" id="A4TPL2"/>
<dbReference type="GeneID" id="57975484"/>
<dbReference type="KEGG" id="ypp:YPDSF_2862"/>
<dbReference type="PATRIC" id="fig|386656.14.peg.126"/>
<dbReference type="GO" id="GO:0005886">
    <property type="term" value="C:plasma membrane"/>
    <property type="evidence" value="ECO:0007669"/>
    <property type="project" value="UniProtKB-SubCell"/>
</dbReference>
<dbReference type="GO" id="GO:0051537">
    <property type="term" value="F:2 iron, 2 sulfur cluster binding"/>
    <property type="evidence" value="ECO:0007669"/>
    <property type="project" value="UniProtKB-KW"/>
</dbReference>
<dbReference type="GO" id="GO:0009055">
    <property type="term" value="F:electron transfer activity"/>
    <property type="evidence" value="ECO:0007669"/>
    <property type="project" value="UniProtKB-UniRule"/>
</dbReference>
<dbReference type="GO" id="GO:0046872">
    <property type="term" value="F:metal ion binding"/>
    <property type="evidence" value="ECO:0007669"/>
    <property type="project" value="UniProtKB-KW"/>
</dbReference>
<dbReference type="GO" id="GO:0016655">
    <property type="term" value="F:oxidoreductase activity, acting on NAD(P)H, quinone or similar compound as acceptor"/>
    <property type="evidence" value="ECO:0007669"/>
    <property type="project" value="InterPro"/>
</dbReference>
<dbReference type="GO" id="GO:0006814">
    <property type="term" value="P:sodium ion transport"/>
    <property type="evidence" value="ECO:0007669"/>
    <property type="project" value="UniProtKB-UniRule"/>
</dbReference>
<dbReference type="CDD" id="cd06188">
    <property type="entry name" value="NADH_quinone_reductase"/>
    <property type="match status" value="1"/>
</dbReference>
<dbReference type="FunFam" id="3.40.50.80:FF:000014">
    <property type="entry name" value="Na(+)-translocating NADH-quinone reductase subunit F"/>
    <property type="match status" value="1"/>
</dbReference>
<dbReference type="Gene3D" id="3.10.20.30">
    <property type="match status" value="1"/>
</dbReference>
<dbReference type="Gene3D" id="3.40.50.80">
    <property type="entry name" value="Nucleotide-binding domain of ferredoxin-NADP reductase (FNR) module"/>
    <property type="match status" value="1"/>
</dbReference>
<dbReference type="Gene3D" id="2.40.30.10">
    <property type="entry name" value="Translation factors"/>
    <property type="match status" value="1"/>
</dbReference>
<dbReference type="HAMAP" id="MF_00430">
    <property type="entry name" value="NqrF"/>
    <property type="match status" value="1"/>
</dbReference>
<dbReference type="InterPro" id="IPR036010">
    <property type="entry name" value="2Fe-2S_ferredoxin-like_sf"/>
</dbReference>
<dbReference type="InterPro" id="IPR001041">
    <property type="entry name" value="2Fe-2S_ferredoxin-type"/>
</dbReference>
<dbReference type="InterPro" id="IPR012675">
    <property type="entry name" value="Beta-grasp_dom_sf"/>
</dbReference>
<dbReference type="InterPro" id="IPR008333">
    <property type="entry name" value="Cbr1-like_FAD-bd_dom"/>
</dbReference>
<dbReference type="InterPro" id="IPR017927">
    <property type="entry name" value="FAD-bd_FR_type"/>
</dbReference>
<dbReference type="InterPro" id="IPR001709">
    <property type="entry name" value="Flavoprot_Pyr_Nucl_cyt_Rdtase"/>
</dbReference>
<dbReference type="InterPro" id="IPR039261">
    <property type="entry name" value="FNR_nucleotide-bd"/>
</dbReference>
<dbReference type="InterPro" id="IPR010205">
    <property type="entry name" value="NqrF"/>
</dbReference>
<dbReference type="InterPro" id="IPR001433">
    <property type="entry name" value="OxRdtase_FAD/NAD-bd"/>
</dbReference>
<dbReference type="InterPro" id="IPR017938">
    <property type="entry name" value="Riboflavin_synthase-like_b-brl"/>
</dbReference>
<dbReference type="NCBIfam" id="TIGR01941">
    <property type="entry name" value="nqrF"/>
    <property type="match status" value="1"/>
</dbReference>
<dbReference type="PANTHER" id="PTHR43644">
    <property type="entry name" value="NA(+)-TRANSLOCATING NADH-QUINONE REDUCTASE SUBUNIT"/>
    <property type="match status" value="1"/>
</dbReference>
<dbReference type="PANTHER" id="PTHR43644:SF1">
    <property type="entry name" value="NAD(P)H-FLAVIN REDUCTASE"/>
    <property type="match status" value="1"/>
</dbReference>
<dbReference type="Pfam" id="PF00970">
    <property type="entry name" value="FAD_binding_6"/>
    <property type="match status" value="1"/>
</dbReference>
<dbReference type="Pfam" id="PF00111">
    <property type="entry name" value="Fer2"/>
    <property type="match status" value="1"/>
</dbReference>
<dbReference type="Pfam" id="PF00175">
    <property type="entry name" value="NAD_binding_1"/>
    <property type="match status" value="1"/>
</dbReference>
<dbReference type="PIRSF" id="PIRSF000044">
    <property type="entry name" value="Cis_Diol_DH_RD"/>
    <property type="match status" value="1"/>
</dbReference>
<dbReference type="PRINTS" id="PR00371">
    <property type="entry name" value="FPNCR"/>
</dbReference>
<dbReference type="SUPFAM" id="SSF54292">
    <property type="entry name" value="2Fe-2S ferredoxin-like"/>
    <property type="match status" value="1"/>
</dbReference>
<dbReference type="SUPFAM" id="SSF52343">
    <property type="entry name" value="Ferredoxin reductase-like, C-terminal NADP-linked domain"/>
    <property type="match status" value="1"/>
</dbReference>
<dbReference type="SUPFAM" id="SSF63380">
    <property type="entry name" value="Riboflavin synthase domain-like"/>
    <property type="match status" value="1"/>
</dbReference>
<dbReference type="PROSITE" id="PS51085">
    <property type="entry name" value="2FE2S_FER_2"/>
    <property type="match status" value="1"/>
</dbReference>
<dbReference type="PROSITE" id="PS51384">
    <property type="entry name" value="FAD_FR"/>
    <property type="match status" value="1"/>
</dbReference>
<sequence length="407" mass="45455">MEIILGVVMFTLIVLALTVMILFAKSKLVNTGDITVEINEDEDKSFTAPAGDKLLNMLSSHGIFVSSACGGGGSCGQCRVTIKEGGGDILPTELSHISKREAKEGCRLACQVNVKQNLKIELPEEIFGVKKWTCEVISNDNKATFIKELKLKIPDGDVVPFRAGGFIQIEAEPHTVKYADFDVPTEYRGDWDKFNLFRFESVVTEPTVRAYSMANYPEEHGIILLNVRIATPPPSVPDAPPGIMSSYIWSLKPGDKVVISGPFGEFFAKDTDAEMVFIGGGAGMAPMRSHIFDQLKRLHSKRKISFWYGARSRREMFYEEDFDQLQAENDNFRWHVALSDPQPEDNWTGYTGFIHNVLLENYLKDHPAPEDCEFYMCGPPMMNAAVIKMLKDLGVEDENIMLDDFGG</sequence>
<accession>A4TPL2</accession>
<gene>
    <name evidence="1" type="primary">nqrF</name>
    <name type="ordered locus">YPDSF_2862</name>
</gene>
<keyword id="KW-0001">2Fe-2S</keyword>
<keyword id="KW-0997">Cell inner membrane</keyword>
<keyword id="KW-1003">Cell membrane</keyword>
<keyword id="KW-0274">FAD</keyword>
<keyword id="KW-0285">Flavoprotein</keyword>
<keyword id="KW-0406">Ion transport</keyword>
<keyword id="KW-0408">Iron</keyword>
<keyword id="KW-0411">Iron-sulfur</keyword>
<keyword id="KW-0472">Membrane</keyword>
<keyword id="KW-0479">Metal-binding</keyword>
<keyword id="KW-0520">NAD</keyword>
<keyword id="KW-0915">Sodium</keyword>
<keyword id="KW-0739">Sodium transport</keyword>
<keyword id="KW-1278">Translocase</keyword>
<keyword id="KW-0812">Transmembrane</keyword>
<keyword id="KW-1133">Transmembrane helix</keyword>
<keyword id="KW-0813">Transport</keyword>
<keyword id="KW-0830">Ubiquinone</keyword>
<name>NQRF_YERPP</name>